<gene>
    <name type="primary">CAS2</name>
</gene>
<proteinExistence type="evidence at protein level"/>
<comment type="function">
    <text evidence="3">Probably involved in the detoxification of cyanide that arises from ethylene biosynthesis in ripening fruits. Has only background level of in vitro cysteine synthase activity.</text>
</comment>
<comment type="catalytic activity">
    <reaction evidence="3">
        <text>hydrogen cyanide + L-cysteine = 3-cyano-L-alanine + hydrogen sulfide + H(+)</text>
        <dbReference type="Rhea" id="RHEA:17821"/>
        <dbReference type="ChEBI" id="CHEBI:15378"/>
        <dbReference type="ChEBI" id="CHEBI:18407"/>
        <dbReference type="ChEBI" id="CHEBI:29919"/>
        <dbReference type="ChEBI" id="CHEBI:35235"/>
        <dbReference type="ChEBI" id="CHEBI:77860"/>
        <dbReference type="EC" id="4.4.1.9"/>
    </reaction>
</comment>
<comment type="cofactor">
    <cofactor evidence="4">
        <name>pyridoxal 5'-phosphate</name>
        <dbReference type="ChEBI" id="CHEBI:597326"/>
    </cofactor>
</comment>
<comment type="subcellular location">
    <subcellularLocation>
        <location evidence="4">Mitochondrion</location>
    </subcellularLocation>
</comment>
<comment type="tissue specificity">
    <text evidence="3">Expressed in leaves, flowers and fruits.</text>
</comment>
<comment type="developmental stage">
    <text evidence="3">Up-regulated during the ripening process of fruits.</text>
</comment>
<comment type="induction">
    <text evidence="3">Up-regulated by ethylene treatment and wounding.</text>
</comment>
<comment type="similarity">
    <text evidence="4">Belongs to the cysteine synthase/cystathionine beta-synthase family.</text>
</comment>
<sequence length="375" mass="40486">MAALRSFLKKRSSVLCNGGAVRHRLFSAQVSQPIPDSPSFAQRIGNLPKDLPATQIKTQVSQLIGRTPIVYLNKVTEGCGAFIAVKQEMFQPTASIKDRPALSMINDAEEKGLITPGETTLIEPTSGNMGISMAFMAAMKGYKMVLTMPSYTSLERRVCMRCFGADLILTDPTKGMGGTVKKAYDLLESTPNAFMLQQFSNPANTKVHFETTGPEIWEDTNGQVDIFVMGIGSGGTVSGVGQYLKSKNPNVQIYGVEPAESNVLNGGKPGPHSITGNGVGFKPDILDMDMMERVIEVRSEDAVNMARQLALKEGLMVGISSGANTVAAMELAKKPENKGKLIVTVHASFGERYLSSVLFQDLRQEAENMQPVAVD</sequence>
<feature type="transit peptide" description="Mitochondrion" evidence="2">
    <location>
        <begin position="1"/>
        <end position="25"/>
    </location>
</feature>
<feature type="chain" id="PRO_0000418640" description="L-3-cyanoalanine synthase 2, mitochondrial">
    <location>
        <begin position="26"/>
        <end position="375"/>
    </location>
</feature>
<feature type="binding site" evidence="1">
    <location>
        <position position="128"/>
    </location>
    <ligand>
        <name>pyridoxal 5'-phosphate</name>
        <dbReference type="ChEBI" id="CHEBI:597326"/>
    </ligand>
</feature>
<feature type="binding site" evidence="1">
    <location>
        <begin position="232"/>
        <end position="236"/>
    </location>
    <ligand>
        <name>pyridoxal 5'-phosphate</name>
        <dbReference type="ChEBI" id="CHEBI:597326"/>
    </ligand>
</feature>
<feature type="binding site" evidence="1">
    <location>
        <position position="320"/>
    </location>
    <ligand>
        <name>pyridoxal 5'-phosphate</name>
        <dbReference type="ChEBI" id="CHEBI:597326"/>
    </ligand>
</feature>
<feature type="modified residue" description="N6-(pyridoxal phosphate)lysine" evidence="1">
    <location>
        <position position="97"/>
    </location>
</feature>
<protein>
    <recommendedName>
        <fullName>L-3-cyanoalanine synthase 2, mitochondrial</fullName>
        <shortName>MdCAS2</shortName>
        <ecNumber>4.4.1.9</ecNumber>
    </recommendedName>
</protein>
<evidence type="ECO:0000250" key="1"/>
<evidence type="ECO:0000255" key="2"/>
<evidence type="ECO:0000269" key="3">
    <source>
    </source>
</evidence>
<evidence type="ECO:0000305" key="4"/>
<organism>
    <name type="scientific">Malus domestica</name>
    <name type="common">Apple</name>
    <name type="synonym">Pyrus malus</name>
    <dbReference type="NCBI Taxonomy" id="3750"/>
    <lineage>
        <taxon>Eukaryota</taxon>
        <taxon>Viridiplantae</taxon>
        <taxon>Streptophyta</taxon>
        <taxon>Embryophyta</taxon>
        <taxon>Tracheophyta</taxon>
        <taxon>Spermatophyta</taxon>
        <taxon>Magnoliopsida</taxon>
        <taxon>eudicotyledons</taxon>
        <taxon>Gunneridae</taxon>
        <taxon>Pentapetalae</taxon>
        <taxon>rosids</taxon>
        <taxon>fabids</taxon>
        <taxon>Rosales</taxon>
        <taxon>Rosaceae</taxon>
        <taxon>Amygdaloideae</taxon>
        <taxon>Maleae</taxon>
        <taxon>Malus</taxon>
    </lineage>
</organism>
<keyword id="KW-0028">Amino-acid biosynthesis</keyword>
<keyword id="KW-0198">Cysteine biosynthesis</keyword>
<keyword id="KW-0456">Lyase</keyword>
<keyword id="KW-0496">Mitochondrion</keyword>
<keyword id="KW-0663">Pyridoxal phosphate</keyword>
<keyword id="KW-0808">Transferase</keyword>
<keyword id="KW-0809">Transit peptide</keyword>
<accession>Q1KLZ1</accession>
<dbReference type="EC" id="4.4.1.9"/>
<dbReference type="EMBL" id="DQ471309">
    <property type="protein sequence ID" value="ABF13210.1"/>
    <property type="molecule type" value="mRNA"/>
</dbReference>
<dbReference type="RefSeq" id="NP_001280751.1">
    <property type="nucleotide sequence ID" value="NM_001293822.1"/>
</dbReference>
<dbReference type="SMR" id="Q1KLZ1"/>
<dbReference type="GeneID" id="103405317"/>
<dbReference type="KEGG" id="mdm:103405317"/>
<dbReference type="OrthoDB" id="10259545at2759"/>
<dbReference type="BioCyc" id="MetaCyc:MONOMER-16251"/>
<dbReference type="BRENDA" id="4.4.1.9">
    <property type="organism ID" value="3164"/>
</dbReference>
<dbReference type="GO" id="GO:0005739">
    <property type="term" value="C:mitochondrion"/>
    <property type="evidence" value="ECO:0007669"/>
    <property type="project" value="UniProtKB-SubCell"/>
</dbReference>
<dbReference type="GO" id="GO:0004124">
    <property type="term" value="F:cysteine synthase activity"/>
    <property type="evidence" value="ECO:0007669"/>
    <property type="project" value="InterPro"/>
</dbReference>
<dbReference type="GO" id="GO:0050017">
    <property type="term" value="F:L-3-cyanoalanine synthase activity"/>
    <property type="evidence" value="ECO:0000314"/>
    <property type="project" value="UniProtKB"/>
</dbReference>
<dbReference type="GO" id="GO:0006535">
    <property type="term" value="P:cysteine biosynthetic process from serine"/>
    <property type="evidence" value="ECO:0007669"/>
    <property type="project" value="InterPro"/>
</dbReference>
<dbReference type="GO" id="GO:0009836">
    <property type="term" value="P:fruit ripening, climacteric"/>
    <property type="evidence" value="ECO:0000314"/>
    <property type="project" value="UniProtKB"/>
</dbReference>
<dbReference type="CDD" id="cd01561">
    <property type="entry name" value="CBS_like"/>
    <property type="match status" value="1"/>
</dbReference>
<dbReference type="FunFam" id="3.40.50.1100:FF:000006">
    <property type="entry name" value="Cysteine synthase"/>
    <property type="match status" value="1"/>
</dbReference>
<dbReference type="FunFam" id="3.40.50.1100:FF:000130">
    <property type="entry name" value="Cysteine synthase"/>
    <property type="match status" value="1"/>
</dbReference>
<dbReference type="Gene3D" id="3.40.50.1100">
    <property type="match status" value="2"/>
</dbReference>
<dbReference type="InterPro" id="IPR005856">
    <property type="entry name" value="Cys_synth"/>
</dbReference>
<dbReference type="InterPro" id="IPR050214">
    <property type="entry name" value="Cys_Synth/Cystath_Beta-Synth"/>
</dbReference>
<dbReference type="InterPro" id="IPR005859">
    <property type="entry name" value="CysK"/>
</dbReference>
<dbReference type="InterPro" id="IPR001216">
    <property type="entry name" value="P-phosphate_BS"/>
</dbReference>
<dbReference type="InterPro" id="IPR001926">
    <property type="entry name" value="TrpB-like_PALP"/>
</dbReference>
<dbReference type="InterPro" id="IPR036052">
    <property type="entry name" value="TrpB-like_PALP_sf"/>
</dbReference>
<dbReference type="NCBIfam" id="TIGR01139">
    <property type="entry name" value="cysK"/>
    <property type="match status" value="1"/>
</dbReference>
<dbReference type="NCBIfam" id="TIGR01136">
    <property type="entry name" value="cysKM"/>
    <property type="match status" value="1"/>
</dbReference>
<dbReference type="PANTHER" id="PTHR10314">
    <property type="entry name" value="CYSTATHIONINE BETA-SYNTHASE"/>
    <property type="match status" value="1"/>
</dbReference>
<dbReference type="Pfam" id="PF00291">
    <property type="entry name" value="PALP"/>
    <property type="match status" value="1"/>
</dbReference>
<dbReference type="SUPFAM" id="SSF53686">
    <property type="entry name" value="Tryptophan synthase beta subunit-like PLP-dependent enzymes"/>
    <property type="match status" value="1"/>
</dbReference>
<dbReference type="PROSITE" id="PS00901">
    <property type="entry name" value="CYS_SYNTHASE"/>
    <property type="match status" value="1"/>
</dbReference>
<name>CAS2_MALDO</name>
<reference key="1">
    <citation type="journal article" date="2007" name="Plant Cell Rep.">
        <title>Expression of MdCAS1 and MdCAS2, encoding apple beta-cyanoalanine synthase homologs, is concomitantly induced during ripening and implicates MdCASs in the possible role of the cyanide detoxification in Fuji apple (Malus domestica Borkh.) fruits.</title>
        <authorList>
            <person name="Han S.E."/>
            <person name="Seo Y.S."/>
            <person name="Kim D."/>
            <person name="Sung S.K."/>
            <person name="Kim W.T."/>
        </authorList>
    </citation>
    <scope>NUCLEOTIDE SEQUENCE [MRNA]</scope>
    <scope>FUNCTION</scope>
    <scope>CATALYTIC ACTIVITY</scope>
    <scope>TISSUE SPECIFICITY</scope>
    <scope>DEVELOPMENTAL STAGE</scope>
    <scope>INDUCTION BY ETHYLENE AND WOUNDING</scope>
    <source>
        <strain>cv. Fuji</strain>
    </source>
</reference>